<dbReference type="EC" id="5.6.1.1" evidence="2"/>
<dbReference type="EMBL" id="BC106552">
    <property type="protein sequence ID" value="AAI06553.1"/>
    <property type="molecule type" value="mRNA"/>
</dbReference>
<dbReference type="RefSeq" id="NP_001089782.1">
    <property type="nucleotide sequence ID" value="NM_001096313.1"/>
</dbReference>
<dbReference type="SMR" id="Q3B8D5"/>
<dbReference type="DNASU" id="734847"/>
<dbReference type="GeneID" id="734847"/>
<dbReference type="KEGG" id="xla:734847"/>
<dbReference type="AGR" id="Xenbase:XB-GENE-5827303"/>
<dbReference type="CTD" id="734847"/>
<dbReference type="Xenbase" id="XB-GENE-5827303">
    <property type="gene designation" value="katnal2.L"/>
</dbReference>
<dbReference type="OrthoDB" id="191529at2759"/>
<dbReference type="Proteomes" id="UP000186698">
    <property type="component" value="Chromosome 1L"/>
</dbReference>
<dbReference type="Bgee" id="734847">
    <property type="expression patterns" value="Expressed in testis and 11 other cell types or tissues"/>
</dbReference>
<dbReference type="GO" id="GO:0005737">
    <property type="term" value="C:cytoplasm"/>
    <property type="evidence" value="ECO:0000250"/>
    <property type="project" value="UniProtKB"/>
</dbReference>
<dbReference type="GO" id="GO:0005874">
    <property type="term" value="C:microtubule"/>
    <property type="evidence" value="ECO:0000250"/>
    <property type="project" value="UniProtKB"/>
</dbReference>
<dbReference type="GO" id="GO:0005819">
    <property type="term" value="C:spindle"/>
    <property type="evidence" value="ECO:0000250"/>
    <property type="project" value="UniProtKB"/>
</dbReference>
<dbReference type="GO" id="GO:0000922">
    <property type="term" value="C:spindle pole"/>
    <property type="evidence" value="ECO:0000250"/>
    <property type="project" value="UniProtKB"/>
</dbReference>
<dbReference type="GO" id="GO:0005524">
    <property type="term" value="F:ATP binding"/>
    <property type="evidence" value="ECO:0007669"/>
    <property type="project" value="UniProtKB-KW"/>
</dbReference>
<dbReference type="GO" id="GO:0016887">
    <property type="term" value="F:ATP hydrolysis activity"/>
    <property type="evidence" value="ECO:0000318"/>
    <property type="project" value="GO_Central"/>
</dbReference>
<dbReference type="GO" id="GO:0008017">
    <property type="term" value="F:microtubule binding"/>
    <property type="evidence" value="ECO:0007669"/>
    <property type="project" value="UniProtKB-UniRule"/>
</dbReference>
<dbReference type="GO" id="GO:0008568">
    <property type="term" value="F:microtubule severing ATPase activity"/>
    <property type="evidence" value="ECO:0007669"/>
    <property type="project" value="UniProtKB-EC"/>
</dbReference>
<dbReference type="GO" id="GO:0051013">
    <property type="term" value="P:microtubule severing"/>
    <property type="evidence" value="ECO:0007669"/>
    <property type="project" value="UniProtKB-UniRule"/>
</dbReference>
<dbReference type="FunFam" id="1.10.8.60:FF:000048">
    <property type="entry name" value="Katanin p60 ATPase-containing subunit A-like 2"/>
    <property type="match status" value="1"/>
</dbReference>
<dbReference type="FunFam" id="3.40.50.300:FF:002850">
    <property type="entry name" value="Katanin p60 ATPase-containing subunit A-like 2"/>
    <property type="match status" value="1"/>
</dbReference>
<dbReference type="Gene3D" id="1.10.8.60">
    <property type="match status" value="1"/>
</dbReference>
<dbReference type="Gene3D" id="3.40.50.300">
    <property type="entry name" value="P-loop containing nucleotide triphosphate hydrolases"/>
    <property type="match status" value="2"/>
</dbReference>
<dbReference type="HAMAP" id="MF_03025">
    <property type="entry name" value="Katanin_p60_AL2"/>
    <property type="match status" value="1"/>
</dbReference>
<dbReference type="InterPro" id="IPR003593">
    <property type="entry name" value="AAA+_ATPase"/>
</dbReference>
<dbReference type="InterPro" id="IPR041569">
    <property type="entry name" value="AAA_lid_3"/>
</dbReference>
<dbReference type="InterPro" id="IPR003959">
    <property type="entry name" value="ATPase_AAA_core"/>
</dbReference>
<dbReference type="InterPro" id="IPR027497">
    <property type="entry name" value="Katanin_p60_AL2"/>
</dbReference>
<dbReference type="InterPro" id="IPR006594">
    <property type="entry name" value="LisH"/>
</dbReference>
<dbReference type="InterPro" id="IPR050304">
    <property type="entry name" value="MT-severing_AAA_ATPase"/>
</dbReference>
<dbReference type="InterPro" id="IPR027417">
    <property type="entry name" value="P-loop_NTPase"/>
</dbReference>
<dbReference type="PANTHER" id="PTHR23074">
    <property type="entry name" value="AAA DOMAIN-CONTAINING"/>
    <property type="match status" value="1"/>
</dbReference>
<dbReference type="PANTHER" id="PTHR23074:SF78">
    <property type="entry name" value="KATANIN P60 ATPASE-CONTAINING SUBUNIT A-LIKE 2"/>
    <property type="match status" value="1"/>
</dbReference>
<dbReference type="Pfam" id="PF00004">
    <property type="entry name" value="AAA"/>
    <property type="match status" value="1"/>
</dbReference>
<dbReference type="Pfam" id="PF17862">
    <property type="entry name" value="AAA_lid_3"/>
    <property type="match status" value="1"/>
</dbReference>
<dbReference type="Pfam" id="PF08513">
    <property type="entry name" value="LisH"/>
    <property type="match status" value="1"/>
</dbReference>
<dbReference type="SMART" id="SM00382">
    <property type="entry name" value="AAA"/>
    <property type="match status" value="1"/>
</dbReference>
<dbReference type="SMART" id="SM00667">
    <property type="entry name" value="LisH"/>
    <property type="match status" value="1"/>
</dbReference>
<dbReference type="SUPFAM" id="SSF52540">
    <property type="entry name" value="P-loop containing nucleoside triphosphate hydrolases"/>
    <property type="match status" value="1"/>
</dbReference>
<dbReference type="PROSITE" id="PS50896">
    <property type="entry name" value="LISH"/>
    <property type="match status" value="1"/>
</dbReference>
<comment type="function">
    <text evidence="2">Severs microtubules in vitro in an ATP-dependent manner. This activity may promote rapid reorganization of cellular microtubule arrays.</text>
</comment>
<comment type="catalytic activity">
    <reaction evidence="2">
        <text>n ATP + n H2O + a microtubule = n ADP + n phosphate + (n+1) alpha/beta tubulin heterodimers.</text>
        <dbReference type="EC" id="5.6.1.1"/>
    </reaction>
</comment>
<comment type="subcellular location">
    <subcellularLocation>
        <location evidence="2">Cytoplasm</location>
        <location evidence="2">Cytoskeleton</location>
    </subcellularLocation>
    <subcellularLocation>
        <location evidence="1">Cytoplasm</location>
    </subcellularLocation>
    <subcellularLocation>
        <location evidence="1">Cytoplasm</location>
        <location evidence="1">Cytoskeleton</location>
        <location evidence="1">Spindle</location>
    </subcellularLocation>
    <subcellularLocation>
        <location evidence="1">Cytoplasm</location>
        <location evidence="1">Cytoskeleton</location>
        <location evidence="1">Spindle pole</location>
    </subcellularLocation>
    <text evidence="1">Localizes within the cytoplasm, partially overlapping with microtubules in interphase and to the mitotic spindle and spindle poles during mitosis.</text>
</comment>
<comment type="similarity">
    <text evidence="2">Belongs to the AAA ATPase family. Katanin p60 subunit A1 subfamily. A-like 2 sub-subfamily.</text>
</comment>
<proteinExistence type="evidence at transcript level"/>
<reference key="1">
    <citation type="submission" date="2005-10" db="EMBL/GenBank/DDBJ databases">
        <authorList>
            <consortium name="NIH - Xenopus Gene Collection (XGC) project"/>
        </authorList>
    </citation>
    <scope>NUCLEOTIDE SEQUENCE [LARGE SCALE MRNA]</scope>
    <source>
        <tissue>Testis</tissue>
    </source>
</reference>
<evidence type="ECO:0000250" key="1">
    <source>
        <dbReference type="UniProtKB" id="Q8IYT4"/>
    </source>
</evidence>
<evidence type="ECO:0000255" key="2">
    <source>
        <dbReference type="HAMAP-Rule" id="MF_03025"/>
    </source>
</evidence>
<evidence type="ECO:0000256" key="3">
    <source>
        <dbReference type="SAM" id="MobiDB-lite"/>
    </source>
</evidence>
<keyword id="KW-0067">ATP-binding</keyword>
<keyword id="KW-0963">Cytoplasm</keyword>
<keyword id="KW-0206">Cytoskeleton</keyword>
<keyword id="KW-0413">Isomerase</keyword>
<keyword id="KW-0493">Microtubule</keyword>
<keyword id="KW-0547">Nucleotide-binding</keyword>
<keyword id="KW-1185">Reference proteome</keyword>
<accession>Q3B8D5</accession>
<feature type="chain" id="PRO_0000333794" description="Katanin p60 ATPase-containing subunit A-like 2">
    <location>
        <begin position="1"/>
        <end position="505"/>
    </location>
</feature>
<feature type="domain" description="LisH" evidence="2">
    <location>
        <begin position="25"/>
        <end position="57"/>
    </location>
</feature>
<feature type="region of interest" description="Disordered" evidence="3">
    <location>
        <begin position="94"/>
        <end position="127"/>
    </location>
</feature>
<feature type="region of interest" description="Disordered" evidence="3">
    <location>
        <begin position="140"/>
        <end position="167"/>
    </location>
</feature>
<feature type="compositionally biased region" description="Polar residues" evidence="3">
    <location>
        <begin position="114"/>
        <end position="127"/>
    </location>
</feature>
<feature type="compositionally biased region" description="Polar residues" evidence="3">
    <location>
        <begin position="155"/>
        <end position="164"/>
    </location>
</feature>
<feature type="binding site" evidence="2">
    <location>
        <begin position="298"/>
        <end position="305"/>
    </location>
    <ligand>
        <name>ATP</name>
        <dbReference type="ChEBI" id="CHEBI:30616"/>
    </ligand>
</feature>
<organism>
    <name type="scientific">Xenopus laevis</name>
    <name type="common">African clawed frog</name>
    <dbReference type="NCBI Taxonomy" id="8355"/>
    <lineage>
        <taxon>Eukaryota</taxon>
        <taxon>Metazoa</taxon>
        <taxon>Chordata</taxon>
        <taxon>Craniata</taxon>
        <taxon>Vertebrata</taxon>
        <taxon>Euteleostomi</taxon>
        <taxon>Amphibia</taxon>
        <taxon>Batrachia</taxon>
        <taxon>Anura</taxon>
        <taxon>Pipoidea</taxon>
        <taxon>Pipidae</taxon>
        <taxon>Xenopodinae</taxon>
        <taxon>Xenopus</taxon>
        <taxon>Xenopus</taxon>
    </lineage>
</organism>
<sequence length="505" mass="56827">MELSYQALRVASQNREAEELRTEARRKNLLILIMHYLLQEGYVDSANSLEQETKISSRRFEVCDNVDLETILMEYESYYYIKFQKYPKITKKALDHDSRVQPKPRSAGKLRRAGSNSTQGLPRIGQQQVIHRPVSSSYYRTNGHQKALSRENSKQESGGNSPQEASEVGLNVSAISKASGEGSHTRRRQVIDFRSMIQDTIKGASQEIALNSLNCNPDPSERLIKPVGAFIGGNSEMRELAAVISRDIYLQNPNVRWDDIIGLDAAKRLVKEAVVYPIRYPQLFTGILSPWKGLLLYGPPGTGKTLLAKAVATECNTTFFNISASTIVSKWRGDSEKLVRVLFELARYHAPSTIFLDELESVMSQRGTGPGELDYAMLRRLEKRILVDLPSKEARQAMIQHWLPPISNSSGVELRMDLDYSTLGEETDGYSGSDIRLVCKEAAMRPVRKIFDALENHHSEHKKLPVISLETVTTSDFSEVLAHTKPSAKSLAEKYSAWQNEFESV</sequence>
<gene>
    <name type="primary">katnal2</name>
</gene>
<protein>
    <recommendedName>
        <fullName evidence="2">Katanin p60 ATPase-containing subunit A-like 2</fullName>
        <shortName evidence="2">Katanin p60 subunit A-like 2</shortName>
        <ecNumber evidence="2">5.6.1.1</ecNumber>
    </recommendedName>
    <alternativeName>
        <fullName evidence="2">p60 katanin-like 2</fullName>
    </alternativeName>
</protein>
<name>KATL2_XENLA</name>